<proteinExistence type="inferred from homology"/>
<dbReference type="EC" id="6.3.5.3" evidence="1"/>
<dbReference type="EMBL" id="AE015929">
    <property type="protein sequence ID" value="AAO04364.1"/>
    <property type="molecule type" value="Genomic_DNA"/>
</dbReference>
<dbReference type="RefSeq" id="NP_764322.1">
    <property type="nucleotide sequence ID" value="NC_004461.1"/>
</dbReference>
<dbReference type="RefSeq" id="WP_002467589.1">
    <property type="nucleotide sequence ID" value="NZ_WBME01000028.1"/>
</dbReference>
<dbReference type="SMR" id="Q8CPN9"/>
<dbReference type="GeneID" id="50019093"/>
<dbReference type="KEGG" id="sep:SE_0767"/>
<dbReference type="PATRIC" id="fig|176280.10.peg.739"/>
<dbReference type="eggNOG" id="COG0046">
    <property type="taxonomic scope" value="Bacteria"/>
</dbReference>
<dbReference type="HOGENOM" id="CLU_003100_0_1_9"/>
<dbReference type="OrthoDB" id="9804441at2"/>
<dbReference type="UniPathway" id="UPA00074">
    <property type="reaction ID" value="UER00128"/>
</dbReference>
<dbReference type="Proteomes" id="UP000001411">
    <property type="component" value="Chromosome"/>
</dbReference>
<dbReference type="GO" id="GO:0005737">
    <property type="term" value="C:cytoplasm"/>
    <property type="evidence" value="ECO:0007669"/>
    <property type="project" value="UniProtKB-SubCell"/>
</dbReference>
<dbReference type="GO" id="GO:0005524">
    <property type="term" value="F:ATP binding"/>
    <property type="evidence" value="ECO:0007669"/>
    <property type="project" value="UniProtKB-UniRule"/>
</dbReference>
<dbReference type="GO" id="GO:0000287">
    <property type="term" value="F:magnesium ion binding"/>
    <property type="evidence" value="ECO:0007669"/>
    <property type="project" value="UniProtKB-UniRule"/>
</dbReference>
<dbReference type="GO" id="GO:0004642">
    <property type="term" value="F:phosphoribosylformylglycinamidine synthase activity"/>
    <property type="evidence" value="ECO:0007669"/>
    <property type="project" value="UniProtKB-UniRule"/>
</dbReference>
<dbReference type="GO" id="GO:0006189">
    <property type="term" value="P:'de novo' IMP biosynthetic process"/>
    <property type="evidence" value="ECO:0007669"/>
    <property type="project" value="UniProtKB-UniRule"/>
</dbReference>
<dbReference type="CDD" id="cd02203">
    <property type="entry name" value="PurL_repeat1"/>
    <property type="match status" value="1"/>
</dbReference>
<dbReference type="CDD" id="cd02204">
    <property type="entry name" value="PurL_repeat2"/>
    <property type="match status" value="1"/>
</dbReference>
<dbReference type="FunFam" id="3.30.1330.10:FF:000004">
    <property type="entry name" value="Phosphoribosylformylglycinamidine synthase subunit PurL"/>
    <property type="match status" value="1"/>
</dbReference>
<dbReference type="Gene3D" id="3.90.650.10">
    <property type="entry name" value="PurM-like C-terminal domain"/>
    <property type="match status" value="2"/>
</dbReference>
<dbReference type="Gene3D" id="3.30.1330.10">
    <property type="entry name" value="PurM-like, N-terminal domain"/>
    <property type="match status" value="2"/>
</dbReference>
<dbReference type="HAMAP" id="MF_00420">
    <property type="entry name" value="PurL_2"/>
    <property type="match status" value="1"/>
</dbReference>
<dbReference type="InterPro" id="IPR010074">
    <property type="entry name" value="PRibForGlyAmidine_synth_PurL"/>
</dbReference>
<dbReference type="InterPro" id="IPR041609">
    <property type="entry name" value="PurL_linker"/>
</dbReference>
<dbReference type="InterPro" id="IPR010918">
    <property type="entry name" value="PurM-like_C_dom"/>
</dbReference>
<dbReference type="InterPro" id="IPR036676">
    <property type="entry name" value="PurM-like_C_sf"/>
</dbReference>
<dbReference type="InterPro" id="IPR016188">
    <property type="entry name" value="PurM-like_N"/>
</dbReference>
<dbReference type="InterPro" id="IPR036921">
    <property type="entry name" value="PurM-like_N_sf"/>
</dbReference>
<dbReference type="NCBIfam" id="TIGR01736">
    <property type="entry name" value="FGAM_synth_II"/>
    <property type="match status" value="1"/>
</dbReference>
<dbReference type="NCBIfam" id="NF002290">
    <property type="entry name" value="PRK01213.1"/>
    <property type="match status" value="1"/>
</dbReference>
<dbReference type="PANTHER" id="PTHR43555">
    <property type="entry name" value="PHOSPHORIBOSYLFORMYLGLYCINAMIDINE SYNTHASE SUBUNIT PURL"/>
    <property type="match status" value="1"/>
</dbReference>
<dbReference type="PANTHER" id="PTHR43555:SF1">
    <property type="entry name" value="PHOSPHORIBOSYLFORMYLGLYCINAMIDINE SYNTHASE SUBUNIT PURL"/>
    <property type="match status" value="1"/>
</dbReference>
<dbReference type="Pfam" id="PF00586">
    <property type="entry name" value="AIRS"/>
    <property type="match status" value="2"/>
</dbReference>
<dbReference type="Pfam" id="PF02769">
    <property type="entry name" value="AIRS_C"/>
    <property type="match status" value="2"/>
</dbReference>
<dbReference type="Pfam" id="PF18072">
    <property type="entry name" value="FGAR-AT_linker"/>
    <property type="match status" value="1"/>
</dbReference>
<dbReference type="PIRSF" id="PIRSF001587">
    <property type="entry name" value="FGAM_synthase_II"/>
    <property type="match status" value="1"/>
</dbReference>
<dbReference type="SUPFAM" id="SSF56042">
    <property type="entry name" value="PurM C-terminal domain-like"/>
    <property type="match status" value="2"/>
</dbReference>
<dbReference type="SUPFAM" id="SSF55326">
    <property type="entry name" value="PurM N-terminal domain-like"/>
    <property type="match status" value="2"/>
</dbReference>
<sequence>MSKFIEPSNEEIKLEKLYQDMGLSDKEYDKVVEILGREPNFTEVGIFSVMWSEHCSYKHSKPFLKQFPTTGEHVLMGPGEGAGVVDIGDNQAVVFKVESHNHPSAIEPYQGAATGVGGIIRDIVSIGARPINLLNSLRFGELTVKQNQRLLKGVVSGIGGYGNCIGIPTTAGEIEFDERYDGNPLVNAMCVGIIDHDMVQKGTAKGVGNSVIYVGLKTGRDGIHGATFASEELTEESESKRPSVQIGDPFVGKKLMEATLEAITFDELVGIQDMGAAGLTSSSSEMAAKGGSGLHLRLDQVPTREPGISPYEMMLSETQERMLLVVEKGTEQKFLDLFNKHELDSAVIGEVTDTDRFVLTYDDEVYADIPVQPLADEAPVYILEGEEKEYNTSKNDYSNIDVHDTFIKLLQHPTIASKHHLYEQYDQQVGANTIIKPGLQASVVRVEGTQKAIASTIDGEARYVFNQPYEGGKMVVAEAYRNLIAVGATPLAMTDCLNYGSPEKKEIYQQLIDSTKGMSEACKVLQTPVVSGNVSLYNETRGTSIFPTPVVGMVGLIEDVSYLKEFKPKAGDKIYLVGETRDDFGGSQLEKLLYGSVNHEFESIDLSDEVSKGKLIKQAIRNGIASHVQTVGKGGLLVTLAKISAHYDLGMQAQLDVTNAQLFSETQGRYIVVVKEGQTLDIDQAQEIGHLTHQQLFDISNSDVKIKENVSDIKQKWEGAIVQCLTTQD</sequence>
<organism>
    <name type="scientific">Staphylococcus epidermidis (strain ATCC 12228 / FDA PCI 1200)</name>
    <dbReference type="NCBI Taxonomy" id="176280"/>
    <lineage>
        <taxon>Bacteria</taxon>
        <taxon>Bacillati</taxon>
        <taxon>Bacillota</taxon>
        <taxon>Bacilli</taxon>
        <taxon>Bacillales</taxon>
        <taxon>Staphylococcaceae</taxon>
        <taxon>Staphylococcus</taxon>
    </lineage>
</organism>
<accession>Q8CPN9</accession>
<gene>
    <name evidence="1" type="primary">purL</name>
    <name type="ordered locus">SE_0767</name>
</gene>
<evidence type="ECO:0000255" key="1">
    <source>
        <dbReference type="HAMAP-Rule" id="MF_00420"/>
    </source>
</evidence>
<protein>
    <recommendedName>
        <fullName evidence="1">Phosphoribosylformylglycinamidine synthase subunit PurL</fullName>
        <shortName evidence="1">FGAM synthase</shortName>
        <ecNumber evidence="1">6.3.5.3</ecNumber>
    </recommendedName>
    <alternativeName>
        <fullName evidence="1">Formylglycinamide ribonucleotide amidotransferase subunit II</fullName>
        <shortName evidence="1">FGAR amidotransferase II</shortName>
        <shortName evidence="1">FGAR-AT II</shortName>
    </alternativeName>
    <alternativeName>
        <fullName evidence="1">Glutamine amidotransferase PurL</fullName>
    </alternativeName>
    <alternativeName>
        <fullName evidence="1">Phosphoribosylformylglycinamidine synthase subunit II</fullName>
    </alternativeName>
</protein>
<name>PURL_STAES</name>
<feature type="chain" id="PRO_0000100491" description="Phosphoribosylformylglycinamidine synthase subunit PurL">
    <location>
        <begin position="1"/>
        <end position="729"/>
    </location>
</feature>
<feature type="active site" evidence="1">
    <location>
        <position position="54"/>
    </location>
</feature>
<feature type="active site" description="Proton acceptor" evidence="1">
    <location>
        <position position="100"/>
    </location>
</feature>
<feature type="binding site" evidence="1">
    <location>
        <position position="57"/>
    </location>
    <ligand>
        <name>ATP</name>
        <dbReference type="ChEBI" id="CHEBI:30616"/>
    </ligand>
</feature>
<feature type="binding site" evidence="1">
    <location>
        <position position="96"/>
    </location>
    <ligand>
        <name>ATP</name>
        <dbReference type="ChEBI" id="CHEBI:30616"/>
    </ligand>
</feature>
<feature type="binding site" evidence="1">
    <location>
        <position position="98"/>
    </location>
    <ligand>
        <name>Mg(2+)</name>
        <dbReference type="ChEBI" id="CHEBI:18420"/>
        <label>1</label>
    </ligand>
</feature>
<feature type="binding site" evidence="1">
    <location>
        <begin position="99"/>
        <end position="102"/>
    </location>
    <ligand>
        <name>substrate</name>
    </ligand>
</feature>
<feature type="binding site" evidence="1">
    <location>
        <position position="121"/>
    </location>
    <ligand>
        <name>substrate</name>
    </ligand>
</feature>
<feature type="binding site" evidence="1">
    <location>
        <position position="122"/>
    </location>
    <ligand>
        <name>Mg(2+)</name>
        <dbReference type="ChEBI" id="CHEBI:18420"/>
        <label>2</label>
    </ligand>
</feature>
<feature type="binding site" evidence="1">
    <location>
        <position position="245"/>
    </location>
    <ligand>
        <name>substrate</name>
    </ligand>
</feature>
<feature type="binding site" evidence="1">
    <location>
        <position position="273"/>
    </location>
    <ligand>
        <name>Mg(2+)</name>
        <dbReference type="ChEBI" id="CHEBI:18420"/>
        <label>2</label>
    </ligand>
</feature>
<feature type="binding site" evidence="1">
    <location>
        <begin position="317"/>
        <end position="319"/>
    </location>
    <ligand>
        <name>substrate</name>
    </ligand>
</feature>
<feature type="binding site" evidence="1">
    <location>
        <position position="495"/>
    </location>
    <ligand>
        <name>ATP</name>
        <dbReference type="ChEBI" id="CHEBI:30616"/>
    </ligand>
</feature>
<feature type="binding site" evidence="1">
    <location>
        <position position="532"/>
    </location>
    <ligand>
        <name>ATP</name>
        <dbReference type="ChEBI" id="CHEBI:30616"/>
    </ligand>
</feature>
<feature type="binding site" evidence="1">
    <location>
        <position position="533"/>
    </location>
    <ligand>
        <name>Mg(2+)</name>
        <dbReference type="ChEBI" id="CHEBI:18420"/>
        <label>1</label>
    </ligand>
</feature>
<feature type="binding site" evidence="1">
    <location>
        <position position="535"/>
    </location>
    <ligand>
        <name>substrate</name>
    </ligand>
</feature>
<reference key="1">
    <citation type="journal article" date="2003" name="Mol. Microbiol.">
        <title>Genome-based analysis of virulence genes in a non-biofilm-forming Staphylococcus epidermidis strain (ATCC 12228).</title>
        <authorList>
            <person name="Zhang Y.-Q."/>
            <person name="Ren S.-X."/>
            <person name="Li H.-L."/>
            <person name="Wang Y.-X."/>
            <person name="Fu G."/>
            <person name="Yang J."/>
            <person name="Qin Z.-Q."/>
            <person name="Miao Y.-G."/>
            <person name="Wang W.-Y."/>
            <person name="Chen R.-S."/>
            <person name="Shen Y."/>
            <person name="Chen Z."/>
            <person name="Yuan Z.-H."/>
            <person name="Zhao G.-P."/>
            <person name="Qu D."/>
            <person name="Danchin A."/>
            <person name="Wen Y.-M."/>
        </authorList>
    </citation>
    <scope>NUCLEOTIDE SEQUENCE [LARGE SCALE GENOMIC DNA]</scope>
    <source>
        <strain>ATCC 12228 / FDA PCI 1200</strain>
    </source>
</reference>
<keyword id="KW-0067">ATP-binding</keyword>
<keyword id="KW-0963">Cytoplasm</keyword>
<keyword id="KW-0436">Ligase</keyword>
<keyword id="KW-0460">Magnesium</keyword>
<keyword id="KW-0479">Metal-binding</keyword>
<keyword id="KW-0547">Nucleotide-binding</keyword>
<keyword id="KW-0658">Purine biosynthesis</keyword>
<comment type="function">
    <text evidence="1">Part of the phosphoribosylformylglycinamidine synthase complex involved in the purines biosynthetic pathway. Catalyzes the ATP-dependent conversion of formylglycinamide ribonucleotide (FGAR) and glutamine to yield formylglycinamidine ribonucleotide (FGAM) and glutamate. The FGAM synthase complex is composed of three subunits. PurQ produces an ammonia molecule by converting glutamine to glutamate. PurL transfers the ammonia molecule to FGAR to form FGAM in an ATP-dependent manner. PurS interacts with PurQ and PurL and is thought to assist in the transfer of the ammonia molecule from PurQ to PurL.</text>
</comment>
<comment type="catalytic activity">
    <reaction evidence="1">
        <text>N(2)-formyl-N(1)-(5-phospho-beta-D-ribosyl)glycinamide + L-glutamine + ATP + H2O = 2-formamido-N(1)-(5-O-phospho-beta-D-ribosyl)acetamidine + L-glutamate + ADP + phosphate + H(+)</text>
        <dbReference type="Rhea" id="RHEA:17129"/>
        <dbReference type="ChEBI" id="CHEBI:15377"/>
        <dbReference type="ChEBI" id="CHEBI:15378"/>
        <dbReference type="ChEBI" id="CHEBI:29985"/>
        <dbReference type="ChEBI" id="CHEBI:30616"/>
        <dbReference type="ChEBI" id="CHEBI:43474"/>
        <dbReference type="ChEBI" id="CHEBI:58359"/>
        <dbReference type="ChEBI" id="CHEBI:147286"/>
        <dbReference type="ChEBI" id="CHEBI:147287"/>
        <dbReference type="ChEBI" id="CHEBI:456216"/>
        <dbReference type="EC" id="6.3.5.3"/>
    </reaction>
</comment>
<comment type="pathway">
    <text evidence="1">Purine metabolism; IMP biosynthesis via de novo pathway; 5-amino-1-(5-phospho-D-ribosyl)imidazole from N(2)-formyl-N(1)-(5-phospho-D-ribosyl)glycinamide: step 1/2.</text>
</comment>
<comment type="subunit">
    <text evidence="1">Monomer. Part of the FGAM synthase complex composed of 1 PurL, 1 PurQ and 2 PurS subunits.</text>
</comment>
<comment type="subcellular location">
    <subcellularLocation>
        <location evidence="1">Cytoplasm</location>
    </subcellularLocation>
</comment>
<comment type="similarity">
    <text evidence="1">Belongs to the FGAMS family.</text>
</comment>